<sequence>MELQLAIDLLNKEEAAKLAQKVEEYVDIVEIGTPIVINEGLPAVQHLNENINNAKVLADLKIMDAADYEVSQAVKYGADIVTILGVAEDASIKAAVEEAHKHGKALLVDMIAVQNLEQRAKELDEMGADYIAVHTGYDLQAEGKSPLDSLRTVKSVIKNSKVAVAGGIKPDTIKDIVAEDPDLVIVGGGIANADDPVEAAKQCRVAIEGK</sequence>
<name>HPS_STAES</name>
<proteinExistence type="inferred from homology"/>
<gene>
    <name type="ordered locus">SE_0341</name>
</gene>
<comment type="function">
    <text evidence="1">Catalyzes the condensation of ribulose 5-phosphate with formaldehyde to form 3-hexulose 6-phosphate.</text>
</comment>
<comment type="catalytic activity">
    <reaction>
        <text>D-ribulose 5-phosphate + formaldehyde = D-arabino-hex-3-ulose 6-phosphate</text>
        <dbReference type="Rhea" id="RHEA:25201"/>
        <dbReference type="ChEBI" id="CHEBI:16842"/>
        <dbReference type="ChEBI" id="CHEBI:58121"/>
        <dbReference type="ChEBI" id="CHEBI:58542"/>
        <dbReference type="EC" id="4.1.2.43"/>
    </reaction>
</comment>
<comment type="pathway">
    <text>One-carbon metabolism; formaldehyde assimilation via RuMP pathway; D-fructose 6-phosphate from D-ribulose 5-phosphate and formaldehyde: step 1/2.</text>
</comment>
<comment type="similarity">
    <text evidence="2">Belongs to the HPS/KGPDC family. HPS subfamily.</text>
</comment>
<protein>
    <recommendedName>
        <fullName>3-hexulose-6-phosphate synthase</fullName>
        <shortName>HPS</shortName>
        <ecNumber>4.1.2.43</ecNumber>
    </recommendedName>
    <alternativeName>
        <fullName>D-arabino-3-hexulose-6-phosphate formaldehyde lyase</fullName>
    </alternativeName>
</protein>
<dbReference type="EC" id="4.1.2.43"/>
<dbReference type="EMBL" id="AE015929">
    <property type="protein sequence ID" value="AAO03938.1"/>
    <property type="molecule type" value="Genomic_DNA"/>
</dbReference>
<dbReference type="RefSeq" id="NP_763896.1">
    <property type="nucleotide sequence ID" value="NC_004461.1"/>
</dbReference>
<dbReference type="RefSeq" id="WP_002485044.1">
    <property type="nucleotide sequence ID" value="NC_004461.1"/>
</dbReference>
<dbReference type="SMR" id="Q8CQ69"/>
<dbReference type="DNASU" id="1056806"/>
<dbReference type="KEGG" id="sep:SE_0341"/>
<dbReference type="PATRIC" id="fig|176280.10.peg.314"/>
<dbReference type="eggNOG" id="COG0269">
    <property type="taxonomic scope" value="Bacteria"/>
</dbReference>
<dbReference type="HOGENOM" id="CLU_081825_1_0_9"/>
<dbReference type="OrthoDB" id="43475at2"/>
<dbReference type="UniPathway" id="UPA00294">
    <property type="reaction ID" value="UER00434"/>
</dbReference>
<dbReference type="Proteomes" id="UP000001411">
    <property type="component" value="Chromosome"/>
</dbReference>
<dbReference type="GO" id="GO:0033982">
    <property type="term" value="F:3-dehydro-L-gulonate-6-phosphate decarboxylase activity"/>
    <property type="evidence" value="ECO:0007669"/>
    <property type="project" value="TreeGrafter"/>
</dbReference>
<dbReference type="GO" id="GO:0043801">
    <property type="term" value="F:hexulose-6-phosphate synthase activity"/>
    <property type="evidence" value="ECO:0007669"/>
    <property type="project" value="UniProtKB-EC"/>
</dbReference>
<dbReference type="GO" id="GO:0004590">
    <property type="term" value="F:orotidine-5'-phosphate decarboxylase activity"/>
    <property type="evidence" value="ECO:0007669"/>
    <property type="project" value="InterPro"/>
</dbReference>
<dbReference type="GO" id="GO:0006207">
    <property type="term" value="P:'de novo' pyrimidine nucleobase biosynthetic process"/>
    <property type="evidence" value="ECO:0007669"/>
    <property type="project" value="InterPro"/>
</dbReference>
<dbReference type="GO" id="GO:0019647">
    <property type="term" value="P:formaldehyde assimilation via ribulose monophosphate cycle"/>
    <property type="evidence" value="ECO:0007669"/>
    <property type="project" value="UniProtKB-UniPathway"/>
</dbReference>
<dbReference type="GO" id="GO:0019854">
    <property type="term" value="P:L-ascorbic acid catabolic process"/>
    <property type="evidence" value="ECO:0007669"/>
    <property type="project" value="TreeGrafter"/>
</dbReference>
<dbReference type="GO" id="GO:0006730">
    <property type="term" value="P:one-carbon metabolic process"/>
    <property type="evidence" value="ECO:0007669"/>
    <property type="project" value="UniProtKB-KW"/>
</dbReference>
<dbReference type="CDD" id="cd04726">
    <property type="entry name" value="KGPDC_HPS"/>
    <property type="match status" value="1"/>
</dbReference>
<dbReference type="FunFam" id="3.20.20.70:FF:000022">
    <property type="entry name" value="3-keto-L-gulonate-6-phosphate decarboxylase UlaD"/>
    <property type="match status" value="1"/>
</dbReference>
<dbReference type="Gene3D" id="3.20.20.70">
    <property type="entry name" value="Aldolase class I"/>
    <property type="match status" value="1"/>
</dbReference>
<dbReference type="InterPro" id="IPR017553">
    <property type="entry name" value="3-hexulose-6-phosphate_synth"/>
</dbReference>
<dbReference type="InterPro" id="IPR013785">
    <property type="entry name" value="Aldolase_TIM"/>
</dbReference>
<dbReference type="InterPro" id="IPR041710">
    <property type="entry name" value="HPS/KGPDC"/>
</dbReference>
<dbReference type="InterPro" id="IPR001754">
    <property type="entry name" value="OMPdeCOase_dom"/>
</dbReference>
<dbReference type="InterPro" id="IPR011060">
    <property type="entry name" value="RibuloseP-bd_barrel"/>
</dbReference>
<dbReference type="NCBIfam" id="TIGR03128">
    <property type="entry name" value="RuMP_HxlA"/>
    <property type="match status" value="1"/>
</dbReference>
<dbReference type="PANTHER" id="PTHR35039">
    <property type="entry name" value="3-KETO-L-GULONATE-6-PHOSPHATE DECARBOXYLASE SGBH-RELATED"/>
    <property type="match status" value="1"/>
</dbReference>
<dbReference type="PANTHER" id="PTHR35039:SF3">
    <property type="entry name" value="3-KETO-L-GULONATE-6-PHOSPHATE DECARBOXYLASE SGBH-RELATED"/>
    <property type="match status" value="1"/>
</dbReference>
<dbReference type="Pfam" id="PF00215">
    <property type="entry name" value="OMPdecase"/>
    <property type="match status" value="1"/>
</dbReference>
<dbReference type="SMART" id="SM00934">
    <property type="entry name" value="OMPdecase"/>
    <property type="match status" value="1"/>
</dbReference>
<dbReference type="SUPFAM" id="SSF51366">
    <property type="entry name" value="Ribulose-phoshate binding barrel"/>
    <property type="match status" value="1"/>
</dbReference>
<reference key="1">
    <citation type="journal article" date="2003" name="Mol. Microbiol.">
        <title>Genome-based analysis of virulence genes in a non-biofilm-forming Staphylococcus epidermidis strain (ATCC 12228).</title>
        <authorList>
            <person name="Zhang Y.-Q."/>
            <person name="Ren S.-X."/>
            <person name="Li H.-L."/>
            <person name="Wang Y.-X."/>
            <person name="Fu G."/>
            <person name="Yang J."/>
            <person name="Qin Z.-Q."/>
            <person name="Miao Y.-G."/>
            <person name="Wang W.-Y."/>
            <person name="Chen R.-S."/>
            <person name="Shen Y."/>
            <person name="Chen Z."/>
            <person name="Yuan Z.-H."/>
            <person name="Zhao G.-P."/>
            <person name="Qu D."/>
            <person name="Danchin A."/>
            <person name="Wen Y.-M."/>
        </authorList>
    </citation>
    <scope>NUCLEOTIDE SEQUENCE [LARGE SCALE GENOMIC DNA]</scope>
    <source>
        <strain>ATCC 12228 / FDA PCI 1200</strain>
    </source>
</reference>
<keyword id="KW-0119">Carbohydrate metabolism</keyword>
<keyword id="KW-0456">Lyase</keyword>
<keyword id="KW-0554">One-carbon metabolism</keyword>
<evidence type="ECO:0000250" key="1"/>
<evidence type="ECO:0000305" key="2"/>
<organism>
    <name type="scientific">Staphylococcus epidermidis (strain ATCC 12228 / FDA PCI 1200)</name>
    <dbReference type="NCBI Taxonomy" id="176280"/>
    <lineage>
        <taxon>Bacteria</taxon>
        <taxon>Bacillati</taxon>
        <taxon>Bacillota</taxon>
        <taxon>Bacilli</taxon>
        <taxon>Bacillales</taxon>
        <taxon>Staphylococcaceae</taxon>
        <taxon>Staphylococcus</taxon>
    </lineage>
</organism>
<accession>Q8CQ69</accession>
<feature type="chain" id="PRO_0000269525" description="3-hexulose-6-phosphate synthase">
    <location>
        <begin position="1"/>
        <end position="210"/>
    </location>
</feature>